<proteinExistence type="inferred from homology"/>
<gene>
    <name evidence="1" type="primary">cobS</name>
    <name type="ordered locus">CLJ_B0863</name>
</gene>
<reference key="1">
    <citation type="submission" date="2008-05" db="EMBL/GenBank/DDBJ databases">
        <title>Genome sequence of Clostridium botulinum Ba4 strain 657.</title>
        <authorList>
            <person name="Shrivastava S."/>
            <person name="Brown J.L."/>
            <person name="Bruce D."/>
            <person name="Detter C."/>
            <person name="Munk C."/>
            <person name="Smith L.A."/>
            <person name="Smith T.J."/>
            <person name="Sutton G."/>
            <person name="Brettin T.S."/>
        </authorList>
    </citation>
    <scope>NUCLEOTIDE SEQUENCE [LARGE SCALE GENOMIC DNA]</scope>
    <source>
        <strain>657 / Type Ba4</strain>
    </source>
</reference>
<accession>C3L2A5</accession>
<keyword id="KW-1003">Cell membrane</keyword>
<keyword id="KW-0169">Cobalamin biosynthesis</keyword>
<keyword id="KW-0460">Magnesium</keyword>
<keyword id="KW-0472">Membrane</keyword>
<keyword id="KW-0808">Transferase</keyword>
<keyword id="KW-0812">Transmembrane</keyword>
<keyword id="KW-1133">Transmembrane helix</keyword>
<sequence>MKSILNDFLLMIQFFTRIPINKNLQCEKVNFRRGAFFLPVVASIIGGMEFLIYLGLKNFLPPNVIIVLLLLFTAMITGGLHMDGLADTCDGFFSLRDKERIIEIMKDSRMGAFGTIAMIINLLLKYQLLYSLVLKDCSIAIILAPVIGRISILFLCLSKRTAKKNGSGNIFIGNMSKPIIFLITIIALAMNTYFLELKITIISFTAVLIITYLFYLLCLNKINGLTGDTLGACNELGEITFLLILLMM</sequence>
<feature type="chain" id="PRO_1000212688" description="Adenosylcobinamide-GDP ribazoletransferase">
    <location>
        <begin position="1"/>
        <end position="248"/>
    </location>
</feature>
<feature type="transmembrane region" description="Helical" evidence="1">
    <location>
        <begin position="36"/>
        <end position="56"/>
    </location>
</feature>
<feature type="transmembrane region" description="Helical" evidence="1">
    <location>
        <begin position="59"/>
        <end position="79"/>
    </location>
</feature>
<feature type="transmembrane region" description="Helical" evidence="1">
    <location>
        <begin position="113"/>
        <end position="133"/>
    </location>
</feature>
<feature type="transmembrane region" description="Helical" evidence="1">
    <location>
        <begin position="137"/>
        <end position="157"/>
    </location>
</feature>
<feature type="transmembrane region" description="Helical" evidence="1">
    <location>
        <begin position="170"/>
        <end position="190"/>
    </location>
</feature>
<feature type="transmembrane region" description="Helical" evidence="1">
    <location>
        <begin position="199"/>
        <end position="219"/>
    </location>
</feature>
<dbReference type="EC" id="2.7.8.26" evidence="1"/>
<dbReference type="EMBL" id="CP001083">
    <property type="protein sequence ID" value="ACQ53773.1"/>
    <property type="molecule type" value="Genomic_DNA"/>
</dbReference>
<dbReference type="RefSeq" id="WP_003362159.1">
    <property type="nucleotide sequence ID" value="NC_012658.1"/>
</dbReference>
<dbReference type="KEGG" id="cbi:CLJ_B0863"/>
<dbReference type="HOGENOM" id="CLU_057426_1_2_9"/>
<dbReference type="UniPathway" id="UPA00148">
    <property type="reaction ID" value="UER00238"/>
</dbReference>
<dbReference type="Proteomes" id="UP000002333">
    <property type="component" value="Chromosome"/>
</dbReference>
<dbReference type="GO" id="GO:0005886">
    <property type="term" value="C:plasma membrane"/>
    <property type="evidence" value="ECO:0007669"/>
    <property type="project" value="UniProtKB-SubCell"/>
</dbReference>
<dbReference type="GO" id="GO:0051073">
    <property type="term" value="F:adenosylcobinamide-GDP ribazoletransferase activity"/>
    <property type="evidence" value="ECO:0007669"/>
    <property type="project" value="UniProtKB-UniRule"/>
</dbReference>
<dbReference type="GO" id="GO:0008818">
    <property type="term" value="F:cobalamin 5'-phosphate synthase activity"/>
    <property type="evidence" value="ECO:0007669"/>
    <property type="project" value="UniProtKB-UniRule"/>
</dbReference>
<dbReference type="GO" id="GO:0009236">
    <property type="term" value="P:cobalamin biosynthetic process"/>
    <property type="evidence" value="ECO:0007669"/>
    <property type="project" value="UniProtKB-UniRule"/>
</dbReference>
<dbReference type="HAMAP" id="MF_00719">
    <property type="entry name" value="CobS"/>
    <property type="match status" value="1"/>
</dbReference>
<dbReference type="InterPro" id="IPR003805">
    <property type="entry name" value="CobS"/>
</dbReference>
<dbReference type="NCBIfam" id="TIGR00317">
    <property type="entry name" value="cobS"/>
    <property type="match status" value="1"/>
</dbReference>
<dbReference type="PANTHER" id="PTHR34148">
    <property type="entry name" value="ADENOSYLCOBINAMIDE-GDP RIBAZOLETRANSFERASE"/>
    <property type="match status" value="1"/>
</dbReference>
<dbReference type="PANTHER" id="PTHR34148:SF1">
    <property type="entry name" value="ADENOSYLCOBINAMIDE-GDP RIBAZOLETRANSFERASE"/>
    <property type="match status" value="1"/>
</dbReference>
<dbReference type="Pfam" id="PF02654">
    <property type="entry name" value="CobS"/>
    <property type="match status" value="1"/>
</dbReference>
<organism>
    <name type="scientific">Clostridium botulinum (strain 657 / Type Ba4)</name>
    <dbReference type="NCBI Taxonomy" id="515621"/>
    <lineage>
        <taxon>Bacteria</taxon>
        <taxon>Bacillati</taxon>
        <taxon>Bacillota</taxon>
        <taxon>Clostridia</taxon>
        <taxon>Eubacteriales</taxon>
        <taxon>Clostridiaceae</taxon>
        <taxon>Clostridium</taxon>
    </lineage>
</organism>
<comment type="function">
    <text evidence="1">Joins adenosylcobinamide-GDP and alpha-ribazole to generate adenosylcobalamin (Ado-cobalamin). Also synthesizes adenosylcobalamin 5'-phosphate from adenosylcobinamide-GDP and alpha-ribazole 5'-phosphate.</text>
</comment>
<comment type="catalytic activity">
    <reaction evidence="1">
        <text>alpha-ribazole + adenosylcob(III)inamide-GDP = adenosylcob(III)alamin + GMP + H(+)</text>
        <dbReference type="Rhea" id="RHEA:16049"/>
        <dbReference type="ChEBI" id="CHEBI:10329"/>
        <dbReference type="ChEBI" id="CHEBI:15378"/>
        <dbReference type="ChEBI" id="CHEBI:18408"/>
        <dbReference type="ChEBI" id="CHEBI:58115"/>
        <dbReference type="ChEBI" id="CHEBI:60487"/>
        <dbReference type="EC" id="2.7.8.26"/>
    </reaction>
</comment>
<comment type="catalytic activity">
    <reaction evidence="1">
        <text>alpha-ribazole 5'-phosphate + adenosylcob(III)inamide-GDP = adenosylcob(III)alamin 5'-phosphate + GMP + H(+)</text>
        <dbReference type="Rhea" id="RHEA:23560"/>
        <dbReference type="ChEBI" id="CHEBI:15378"/>
        <dbReference type="ChEBI" id="CHEBI:57918"/>
        <dbReference type="ChEBI" id="CHEBI:58115"/>
        <dbReference type="ChEBI" id="CHEBI:60487"/>
        <dbReference type="ChEBI" id="CHEBI:60493"/>
        <dbReference type="EC" id="2.7.8.26"/>
    </reaction>
</comment>
<comment type="cofactor">
    <cofactor evidence="1">
        <name>Mg(2+)</name>
        <dbReference type="ChEBI" id="CHEBI:18420"/>
    </cofactor>
</comment>
<comment type="pathway">
    <text evidence="1">Cofactor biosynthesis; adenosylcobalamin biosynthesis; adenosylcobalamin from cob(II)yrinate a,c-diamide: step 7/7.</text>
</comment>
<comment type="subcellular location">
    <subcellularLocation>
        <location evidence="1">Cell membrane</location>
        <topology evidence="1">Multi-pass membrane protein</topology>
    </subcellularLocation>
</comment>
<comment type="similarity">
    <text evidence="1">Belongs to the CobS family.</text>
</comment>
<name>COBS_CLOB6</name>
<evidence type="ECO:0000255" key="1">
    <source>
        <dbReference type="HAMAP-Rule" id="MF_00719"/>
    </source>
</evidence>
<protein>
    <recommendedName>
        <fullName evidence="1">Adenosylcobinamide-GDP ribazoletransferase</fullName>
        <ecNumber evidence="1">2.7.8.26</ecNumber>
    </recommendedName>
    <alternativeName>
        <fullName evidence="1">Cobalamin synthase</fullName>
    </alternativeName>
    <alternativeName>
        <fullName evidence="1">Cobalamin-5'-phosphate synthase</fullName>
    </alternativeName>
</protein>